<protein>
    <recommendedName>
        <fullName>Locustakinin-1</fullName>
    </recommendedName>
    <alternativeName>
        <fullName>Locustakinin I</fullName>
    </alternativeName>
</protein>
<feature type="peptide" id="PRO_0000044158" description="Locustakinin-1">
    <location>
        <begin position="1"/>
        <end position="6"/>
    </location>
</feature>
<feature type="modified residue" description="Glycine amide" evidence="1">
    <location>
        <position position="6"/>
    </location>
</feature>
<sequence length="6" mass="654">AFSSWG</sequence>
<proteinExistence type="evidence at protein level"/>
<reference key="1">
    <citation type="journal article" date="1992" name="Regul. Pept.">
        <title>Locustakinin, a novel myotropic peptide from Locusta migratoria, isolation, primary structure and synthesis.</title>
        <authorList>
            <person name="Schoofs L."/>
            <person name="Holman G.M."/>
            <person name="Proost P."/>
            <person name="van Damme J."/>
            <person name="Hayes T.K."/>
            <person name="de Loof A."/>
        </authorList>
    </citation>
    <scope>PROTEIN SEQUENCE</scope>
    <scope>AMIDATION AT GLY-6</scope>
    <source>
        <tissue>Corpora cardiaca</tissue>
    </source>
</reference>
<name>LOK1_LOCMI</name>
<accession>P41491</accession>
<comment type="function">
    <text>Myotropic peptide. May be important in the stimulation of ion transport and inhibition of diuretic activity in Malpighian tubules.</text>
</comment>
<comment type="subcellular location">
    <subcellularLocation>
        <location>Secreted</location>
    </subcellularLocation>
</comment>
<organism>
    <name type="scientific">Locusta migratoria</name>
    <name type="common">Migratory locust</name>
    <dbReference type="NCBI Taxonomy" id="7004"/>
    <lineage>
        <taxon>Eukaryota</taxon>
        <taxon>Metazoa</taxon>
        <taxon>Ecdysozoa</taxon>
        <taxon>Arthropoda</taxon>
        <taxon>Hexapoda</taxon>
        <taxon>Insecta</taxon>
        <taxon>Pterygota</taxon>
        <taxon>Neoptera</taxon>
        <taxon>Polyneoptera</taxon>
        <taxon>Orthoptera</taxon>
        <taxon>Caelifera</taxon>
        <taxon>Acrididea</taxon>
        <taxon>Acridomorpha</taxon>
        <taxon>Acridoidea</taxon>
        <taxon>Acrididae</taxon>
        <taxon>Oedipodinae</taxon>
        <taxon>Locusta</taxon>
    </lineage>
</organism>
<keyword id="KW-0027">Amidation</keyword>
<keyword id="KW-0903">Direct protein sequencing</keyword>
<keyword id="KW-0527">Neuropeptide</keyword>
<keyword id="KW-0964">Secreted</keyword>
<evidence type="ECO:0000269" key="1">
    <source>
    </source>
</evidence>
<dbReference type="PIR" id="A61068">
    <property type="entry name" value="A61068"/>
</dbReference>
<dbReference type="GO" id="GO:0005576">
    <property type="term" value="C:extracellular region"/>
    <property type="evidence" value="ECO:0007669"/>
    <property type="project" value="UniProtKB-SubCell"/>
</dbReference>
<dbReference type="GO" id="GO:0007218">
    <property type="term" value="P:neuropeptide signaling pathway"/>
    <property type="evidence" value="ECO:0007669"/>
    <property type="project" value="UniProtKB-KW"/>
</dbReference>